<accession>Q62JC4</accession>
<feature type="chain" id="PRO_0000134145" description="Small ribosomal subunit protein uS2">
    <location>
        <begin position="1"/>
        <end position="246"/>
    </location>
</feature>
<evidence type="ECO:0000255" key="1">
    <source>
        <dbReference type="HAMAP-Rule" id="MF_00291"/>
    </source>
</evidence>
<evidence type="ECO:0000305" key="2"/>
<organism>
    <name type="scientific">Burkholderia mallei (strain ATCC 23344)</name>
    <dbReference type="NCBI Taxonomy" id="243160"/>
    <lineage>
        <taxon>Bacteria</taxon>
        <taxon>Pseudomonadati</taxon>
        <taxon>Pseudomonadota</taxon>
        <taxon>Betaproteobacteria</taxon>
        <taxon>Burkholderiales</taxon>
        <taxon>Burkholderiaceae</taxon>
        <taxon>Burkholderia</taxon>
        <taxon>pseudomallei group</taxon>
    </lineage>
</organism>
<dbReference type="EMBL" id="CP000010">
    <property type="protein sequence ID" value="AAU47755.1"/>
    <property type="molecule type" value="Genomic_DNA"/>
</dbReference>
<dbReference type="RefSeq" id="WP_004193246.1">
    <property type="nucleotide sequence ID" value="NC_006348.1"/>
</dbReference>
<dbReference type="RefSeq" id="YP_103195.1">
    <property type="nucleotide sequence ID" value="NC_006348.1"/>
</dbReference>
<dbReference type="SMR" id="Q62JC4"/>
<dbReference type="GeneID" id="93060700"/>
<dbReference type="KEGG" id="bma:BMA1555"/>
<dbReference type="PATRIC" id="fig|243160.12.peg.1600"/>
<dbReference type="eggNOG" id="COG0052">
    <property type="taxonomic scope" value="Bacteria"/>
</dbReference>
<dbReference type="HOGENOM" id="CLU_040318_1_2_4"/>
<dbReference type="Proteomes" id="UP000006693">
    <property type="component" value="Chromosome 1"/>
</dbReference>
<dbReference type="GO" id="GO:0022627">
    <property type="term" value="C:cytosolic small ribosomal subunit"/>
    <property type="evidence" value="ECO:0007669"/>
    <property type="project" value="TreeGrafter"/>
</dbReference>
<dbReference type="GO" id="GO:0003735">
    <property type="term" value="F:structural constituent of ribosome"/>
    <property type="evidence" value="ECO:0007669"/>
    <property type="project" value="InterPro"/>
</dbReference>
<dbReference type="GO" id="GO:0006412">
    <property type="term" value="P:translation"/>
    <property type="evidence" value="ECO:0007669"/>
    <property type="project" value="UniProtKB-UniRule"/>
</dbReference>
<dbReference type="CDD" id="cd01425">
    <property type="entry name" value="RPS2"/>
    <property type="match status" value="1"/>
</dbReference>
<dbReference type="FunFam" id="1.10.287.610:FF:000001">
    <property type="entry name" value="30S ribosomal protein S2"/>
    <property type="match status" value="1"/>
</dbReference>
<dbReference type="Gene3D" id="3.40.50.10490">
    <property type="entry name" value="Glucose-6-phosphate isomerase like protein, domain 1"/>
    <property type="match status" value="1"/>
</dbReference>
<dbReference type="Gene3D" id="1.10.287.610">
    <property type="entry name" value="Helix hairpin bin"/>
    <property type="match status" value="1"/>
</dbReference>
<dbReference type="HAMAP" id="MF_00291_B">
    <property type="entry name" value="Ribosomal_uS2_B"/>
    <property type="match status" value="1"/>
</dbReference>
<dbReference type="InterPro" id="IPR001865">
    <property type="entry name" value="Ribosomal_uS2"/>
</dbReference>
<dbReference type="InterPro" id="IPR005706">
    <property type="entry name" value="Ribosomal_uS2_bac/mit/plastid"/>
</dbReference>
<dbReference type="InterPro" id="IPR018130">
    <property type="entry name" value="Ribosomal_uS2_CS"/>
</dbReference>
<dbReference type="InterPro" id="IPR023591">
    <property type="entry name" value="Ribosomal_uS2_flav_dom_sf"/>
</dbReference>
<dbReference type="NCBIfam" id="TIGR01011">
    <property type="entry name" value="rpsB_bact"/>
    <property type="match status" value="1"/>
</dbReference>
<dbReference type="PANTHER" id="PTHR12534">
    <property type="entry name" value="30S RIBOSOMAL PROTEIN S2 PROKARYOTIC AND ORGANELLAR"/>
    <property type="match status" value="1"/>
</dbReference>
<dbReference type="PANTHER" id="PTHR12534:SF0">
    <property type="entry name" value="SMALL RIBOSOMAL SUBUNIT PROTEIN US2M"/>
    <property type="match status" value="1"/>
</dbReference>
<dbReference type="Pfam" id="PF00318">
    <property type="entry name" value="Ribosomal_S2"/>
    <property type="match status" value="1"/>
</dbReference>
<dbReference type="PRINTS" id="PR00395">
    <property type="entry name" value="RIBOSOMALS2"/>
</dbReference>
<dbReference type="SUPFAM" id="SSF52313">
    <property type="entry name" value="Ribosomal protein S2"/>
    <property type="match status" value="1"/>
</dbReference>
<dbReference type="PROSITE" id="PS00962">
    <property type="entry name" value="RIBOSOMAL_S2_1"/>
    <property type="match status" value="1"/>
</dbReference>
<sequence>MAITMRQMLEAGVHFGHQTRFWNPKMAPFIFGHRNKIHIINLEKTLPMYNDALKYVRQLAANRGTILFVGTKRQSRDTIAQEALRAGMPYVNARWLGGMLTNFKTLKVSIKRLKDMEAAVEAGELEKMSKKEALLFEREIAKLQKSIGGVKDMGGIPDAIFVVDVGYHKIAVTEANKLGVPVIAVVDTNHSPEGVDYVIPGNDDSSKAVALYAQGVADAILEGRANAVNEVVQAVRGDDEYVEENA</sequence>
<protein>
    <recommendedName>
        <fullName evidence="1">Small ribosomal subunit protein uS2</fullName>
    </recommendedName>
    <alternativeName>
        <fullName evidence="2">30S ribosomal protein S2</fullName>
    </alternativeName>
</protein>
<name>RS2_BURMA</name>
<proteinExistence type="inferred from homology"/>
<reference key="1">
    <citation type="journal article" date="2004" name="Proc. Natl. Acad. Sci. U.S.A.">
        <title>Structural flexibility in the Burkholderia mallei genome.</title>
        <authorList>
            <person name="Nierman W.C."/>
            <person name="DeShazer D."/>
            <person name="Kim H.S."/>
            <person name="Tettelin H."/>
            <person name="Nelson K.E."/>
            <person name="Feldblyum T.V."/>
            <person name="Ulrich R.L."/>
            <person name="Ronning C.M."/>
            <person name="Brinkac L.M."/>
            <person name="Daugherty S.C."/>
            <person name="Davidsen T.D."/>
            <person name="DeBoy R.T."/>
            <person name="Dimitrov G."/>
            <person name="Dodson R.J."/>
            <person name="Durkin A.S."/>
            <person name="Gwinn M.L."/>
            <person name="Haft D.H."/>
            <person name="Khouri H.M."/>
            <person name="Kolonay J.F."/>
            <person name="Madupu R."/>
            <person name="Mohammoud Y."/>
            <person name="Nelson W.C."/>
            <person name="Radune D."/>
            <person name="Romero C.M."/>
            <person name="Sarria S."/>
            <person name="Selengut J."/>
            <person name="Shamblin C."/>
            <person name="Sullivan S.A."/>
            <person name="White O."/>
            <person name="Yu Y."/>
            <person name="Zafar N."/>
            <person name="Zhou L."/>
            <person name="Fraser C.M."/>
        </authorList>
    </citation>
    <scope>NUCLEOTIDE SEQUENCE [LARGE SCALE GENOMIC DNA]</scope>
    <source>
        <strain>ATCC 23344</strain>
    </source>
</reference>
<gene>
    <name evidence="1" type="primary">rpsB</name>
    <name type="ordered locus">BMA1555</name>
</gene>
<keyword id="KW-1185">Reference proteome</keyword>
<keyword id="KW-0687">Ribonucleoprotein</keyword>
<keyword id="KW-0689">Ribosomal protein</keyword>
<comment type="similarity">
    <text evidence="1">Belongs to the universal ribosomal protein uS2 family.</text>
</comment>